<feature type="chain" id="PRO_0000437936" description="ESAT-6-like protein EsxA">
    <location>
        <begin position="1"/>
        <end position="95"/>
    </location>
</feature>
<evidence type="ECO:0000269" key="1">
    <source>
    </source>
</evidence>
<evidence type="ECO:0000303" key="2">
    <source>
    </source>
</evidence>
<evidence type="ECO:0000305" key="3"/>
<proteinExistence type="evidence at protein level"/>
<gene>
    <name evidence="2" type="primary">esxA</name>
    <name type="ordered locus">DIP0559</name>
</gene>
<sequence length="95" mass="10407">MEKIKYGFGEIEAAASDIQSTSGRINSLLEDLKAHIRPMAAAWEGESAQAYNEAQQQWDSSAAELNTILSTISNTVRQGNDRMSEVNRMAAASWS</sequence>
<comment type="subunit">
    <text evidence="1">Forms a tight 1:1 complex with EsxB.</text>
</comment>
<comment type="miscellaneous">
    <text evidence="1">To improve expression in E.coli the proteins were cloned as a single protein in the order esxB-esxA with a cleavable thrombin tag (PubMed:19854905).</text>
</comment>
<comment type="similarity">
    <text evidence="3">Belongs to the WXG100 family. ESAT-6 subfamily.</text>
</comment>
<name>ESXA_CORDI</name>
<reference key="1">
    <citation type="journal article" date="2003" name="Nucleic Acids Res.">
        <title>The complete genome sequence and analysis of Corynebacterium diphtheriae NCTC13129.</title>
        <authorList>
            <person name="Cerdeno-Tarraga A.-M."/>
            <person name="Efstratiou A."/>
            <person name="Dover L.G."/>
            <person name="Holden M.T.G."/>
            <person name="Pallen M.J."/>
            <person name="Bentley S.D."/>
            <person name="Besra G.S."/>
            <person name="Churcher C.M."/>
            <person name="James K.D."/>
            <person name="De Zoysa A."/>
            <person name="Chillingworth T."/>
            <person name="Cronin A."/>
            <person name="Dowd L."/>
            <person name="Feltwell T."/>
            <person name="Hamlin N."/>
            <person name="Holroyd S."/>
            <person name="Jagels K."/>
            <person name="Moule S."/>
            <person name="Quail M.A."/>
            <person name="Rabbinowitsch E."/>
            <person name="Rutherford K.M."/>
            <person name="Thomson N.R."/>
            <person name="Unwin L."/>
            <person name="Whitehead S."/>
            <person name="Barrell B.G."/>
            <person name="Parkhill J."/>
        </authorList>
    </citation>
    <scope>NUCLEOTIDE SEQUENCE [LARGE SCALE GENOMIC DNA]</scope>
    <source>
        <strain>ATCC 700971 / NCTC 13129 / Biotype gravis</strain>
    </source>
</reference>
<reference key="2">
    <citation type="journal article" date="2010" name="J. Bacteriol.">
        <title>Conservation of structure and protein-protein interactions mediated by the secreted mycobacterial proteins EsxA, EsxB, and EspA.</title>
        <authorList>
            <person name="Callahan B."/>
            <person name="Nguyen K."/>
            <person name="Collins A."/>
            <person name="Valdes K."/>
            <person name="Caplow M."/>
            <person name="Crossman D.K."/>
            <person name="Steyn A.J."/>
            <person name="Eisele L."/>
            <person name="Derbyshire K.M."/>
        </authorList>
    </citation>
    <scope>SUBUNIT</scope>
    <source>
        <strain>ATCC 700971 / NCTC 13129 / Biotype gravis</strain>
    </source>
</reference>
<keyword id="KW-1185">Reference proteome</keyword>
<organism>
    <name type="scientific">Corynebacterium diphtheriae (strain ATCC 700971 / NCTC 13129 / Biotype gravis)</name>
    <dbReference type="NCBI Taxonomy" id="257309"/>
    <lineage>
        <taxon>Bacteria</taxon>
        <taxon>Bacillati</taxon>
        <taxon>Actinomycetota</taxon>
        <taxon>Actinomycetes</taxon>
        <taxon>Mycobacteriales</taxon>
        <taxon>Corynebacteriaceae</taxon>
        <taxon>Corynebacterium</taxon>
    </lineage>
</organism>
<dbReference type="EMBL" id="BX248355">
    <property type="protein sequence ID" value="CAE49071.1"/>
    <property type="molecule type" value="Genomic_DNA"/>
</dbReference>
<dbReference type="RefSeq" id="WP_004566873.1">
    <property type="nucleotide sequence ID" value="NC_002935.2"/>
</dbReference>
<dbReference type="SMR" id="Q6NJ54"/>
<dbReference type="STRING" id="257309.DIP0559"/>
<dbReference type="TCDB" id="1.C.95.1.2">
    <property type="family name" value="the pore-forming esat-6 protein (esat-6) family"/>
</dbReference>
<dbReference type="KEGG" id="cdi:DIP0559"/>
<dbReference type="HOGENOM" id="CLU_151185_3_4_11"/>
<dbReference type="Proteomes" id="UP000002198">
    <property type="component" value="Chromosome"/>
</dbReference>
<dbReference type="Gene3D" id="1.10.287.1060">
    <property type="entry name" value="ESAT-6-like"/>
    <property type="match status" value="1"/>
</dbReference>
<dbReference type="InterPro" id="IPR036689">
    <property type="entry name" value="ESAT-6-like_sf"/>
</dbReference>
<dbReference type="InterPro" id="IPR010310">
    <property type="entry name" value="T7SS_ESAT-6-like"/>
</dbReference>
<dbReference type="NCBIfam" id="TIGR03930">
    <property type="entry name" value="WXG100_ESAT6"/>
    <property type="match status" value="1"/>
</dbReference>
<dbReference type="Pfam" id="PF06013">
    <property type="entry name" value="WXG100"/>
    <property type="match status" value="1"/>
</dbReference>
<dbReference type="SUPFAM" id="SSF140453">
    <property type="entry name" value="EsxAB dimer-like"/>
    <property type="match status" value="1"/>
</dbReference>
<accession>Q6NJ54</accession>
<protein>
    <recommendedName>
        <fullName evidence="2">ESAT-6-like protein EsxA</fullName>
    </recommendedName>
</protein>